<sequence length="155" mass="17805">MALYEHVFLARQDISAQQVDALVEQYKGVIEANGGKVGRIENWGLKSLTYRIKKNRKAHYALMDIDAPAAAVQEMERQMRISEDVLRYMTIAVEKHEEGPSAMMQKRDRDDRPREGGRGPREGGFGDRDRGPRPPREGGFGDRDDRPRRPREDRV</sequence>
<reference key="1">
    <citation type="journal article" date="2006" name="Genome Biol.">
        <title>The genome of Rhizobium leguminosarum has recognizable core and accessory components.</title>
        <authorList>
            <person name="Young J.P.W."/>
            <person name="Crossman L.C."/>
            <person name="Johnston A.W.B."/>
            <person name="Thomson N.R."/>
            <person name="Ghazoui Z.F."/>
            <person name="Hull K.H."/>
            <person name="Wexler M."/>
            <person name="Curson A.R.J."/>
            <person name="Todd J.D."/>
            <person name="Poole P.S."/>
            <person name="Mauchline T.H."/>
            <person name="East A.K."/>
            <person name="Quail M.A."/>
            <person name="Churcher C."/>
            <person name="Arrowsmith C."/>
            <person name="Cherevach I."/>
            <person name="Chillingworth T."/>
            <person name="Clarke K."/>
            <person name="Cronin A."/>
            <person name="Davis P."/>
            <person name="Fraser A."/>
            <person name="Hance Z."/>
            <person name="Hauser H."/>
            <person name="Jagels K."/>
            <person name="Moule S."/>
            <person name="Mungall K."/>
            <person name="Norbertczak H."/>
            <person name="Rabbinowitsch E."/>
            <person name="Sanders M."/>
            <person name="Simmonds M."/>
            <person name="Whitehead S."/>
            <person name="Parkhill J."/>
        </authorList>
    </citation>
    <scope>NUCLEOTIDE SEQUENCE [LARGE SCALE GENOMIC DNA]</scope>
    <source>
        <strain>DSM 114642 / LMG 32736 / 3841</strain>
    </source>
</reference>
<name>RS6_RHIJ3</name>
<feature type="chain" id="PRO_1000005327" description="Small ribosomal subunit protein bS6">
    <location>
        <begin position="1"/>
        <end position="155"/>
    </location>
</feature>
<feature type="region of interest" description="Disordered" evidence="2">
    <location>
        <begin position="94"/>
        <end position="155"/>
    </location>
</feature>
<organism>
    <name type="scientific">Rhizobium johnstonii (strain DSM 114642 / LMG 32736 / 3841)</name>
    <name type="common">Rhizobium leguminosarum bv. viciae</name>
    <dbReference type="NCBI Taxonomy" id="216596"/>
    <lineage>
        <taxon>Bacteria</taxon>
        <taxon>Pseudomonadati</taxon>
        <taxon>Pseudomonadota</taxon>
        <taxon>Alphaproteobacteria</taxon>
        <taxon>Hyphomicrobiales</taxon>
        <taxon>Rhizobiaceae</taxon>
        <taxon>Rhizobium/Agrobacterium group</taxon>
        <taxon>Rhizobium</taxon>
        <taxon>Rhizobium johnstonii</taxon>
    </lineage>
</organism>
<evidence type="ECO:0000255" key="1">
    <source>
        <dbReference type="HAMAP-Rule" id="MF_00360"/>
    </source>
</evidence>
<evidence type="ECO:0000256" key="2">
    <source>
        <dbReference type="SAM" id="MobiDB-lite"/>
    </source>
</evidence>
<evidence type="ECO:0000305" key="3"/>
<accession>Q1MJ10</accession>
<protein>
    <recommendedName>
        <fullName evidence="1">Small ribosomal subunit protein bS6</fullName>
    </recommendedName>
    <alternativeName>
        <fullName evidence="3">30S ribosomal protein S6</fullName>
    </alternativeName>
</protein>
<keyword id="KW-0687">Ribonucleoprotein</keyword>
<keyword id="KW-0689">Ribosomal protein</keyword>
<keyword id="KW-0694">RNA-binding</keyword>
<keyword id="KW-0699">rRNA-binding</keyword>
<proteinExistence type="inferred from homology"/>
<dbReference type="EMBL" id="AM236080">
    <property type="protein sequence ID" value="CAK07050.1"/>
    <property type="molecule type" value="Genomic_DNA"/>
</dbReference>
<dbReference type="RefSeq" id="WP_003547040.1">
    <property type="nucleotide sequence ID" value="NC_008380.1"/>
</dbReference>
<dbReference type="SMR" id="Q1MJ10"/>
<dbReference type="EnsemblBacteria" id="CAK07050">
    <property type="protein sequence ID" value="CAK07050"/>
    <property type="gene ID" value="RL1555"/>
</dbReference>
<dbReference type="GeneID" id="84669245"/>
<dbReference type="KEGG" id="rle:RL1555"/>
<dbReference type="eggNOG" id="COG0360">
    <property type="taxonomic scope" value="Bacteria"/>
</dbReference>
<dbReference type="HOGENOM" id="CLU_113441_2_0_5"/>
<dbReference type="Proteomes" id="UP000006575">
    <property type="component" value="Chromosome"/>
</dbReference>
<dbReference type="GO" id="GO:0022627">
    <property type="term" value="C:cytosolic small ribosomal subunit"/>
    <property type="evidence" value="ECO:0007669"/>
    <property type="project" value="TreeGrafter"/>
</dbReference>
<dbReference type="GO" id="GO:0070181">
    <property type="term" value="F:small ribosomal subunit rRNA binding"/>
    <property type="evidence" value="ECO:0007669"/>
    <property type="project" value="TreeGrafter"/>
</dbReference>
<dbReference type="GO" id="GO:0003735">
    <property type="term" value="F:structural constituent of ribosome"/>
    <property type="evidence" value="ECO:0007669"/>
    <property type="project" value="InterPro"/>
</dbReference>
<dbReference type="GO" id="GO:0006412">
    <property type="term" value="P:translation"/>
    <property type="evidence" value="ECO:0007669"/>
    <property type="project" value="UniProtKB-UniRule"/>
</dbReference>
<dbReference type="CDD" id="cd00473">
    <property type="entry name" value="bS6"/>
    <property type="match status" value="1"/>
</dbReference>
<dbReference type="Gene3D" id="3.30.70.60">
    <property type="match status" value="1"/>
</dbReference>
<dbReference type="HAMAP" id="MF_00360">
    <property type="entry name" value="Ribosomal_bS6"/>
    <property type="match status" value="1"/>
</dbReference>
<dbReference type="InterPro" id="IPR000529">
    <property type="entry name" value="Ribosomal_bS6"/>
</dbReference>
<dbReference type="InterPro" id="IPR035980">
    <property type="entry name" value="Ribosomal_bS6_sf"/>
</dbReference>
<dbReference type="InterPro" id="IPR020814">
    <property type="entry name" value="Ribosomal_S6_plastid/chlpt"/>
</dbReference>
<dbReference type="InterPro" id="IPR014717">
    <property type="entry name" value="Transl_elong_EF1B/ribsomal_bS6"/>
</dbReference>
<dbReference type="NCBIfam" id="TIGR00166">
    <property type="entry name" value="S6"/>
    <property type="match status" value="1"/>
</dbReference>
<dbReference type="PANTHER" id="PTHR21011">
    <property type="entry name" value="MITOCHONDRIAL 28S RIBOSOMAL PROTEIN S6"/>
    <property type="match status" value="1"/>
</dbReference>
<dbReference type="PANTHER" id="PTHR21011:SF1">
    <property type="entry name" value="SMALL RIBOSOMAL SUBUNIT PROTEIN BS6M"/>
    <property type="match status" value="1"/>
</dbReference>
<dbReference type="Pfam" id="PF01250">
    <property type="entry name" value="Ribosomal_S6"/>
    <property type="match status" value="1"/>
</dbReference>
<dbReference type="SUPFAM" id="SSF54995">
    <property type="entry name" value="Ribosomal protein S6"/>
    <property type="match status" value="1"/>
</dbReference>
<gene>
    <name evidence="1" type="primary">rpsF</name>
    <name type="ordered locus">RL1555</name>
</gene>
<comment type="function">
    <text evidence="1">Binds together with bS18 to 16S ribosomal RNA.</text>
</comment>
<comment type="similarity">
    <text evidence="1">Belongs to the bacterial ribosomal protein bS6 family.</text>
</comment>